<comment type="function">
    <text evidence="2">Associates with IL12B to form the pro-inflammatory cytokine IL-23 that plays different roles in innate and adaptive immunity. Released by antigen-presenting cells such as dendritic cells or macrophages, binds to a heterodimeric receptor complex composed of IL12RB1 and IL23R to activate JAK2 and TYK2 which then phosphorylate the receptor to form a docking site leading to the phosphorylation of STAT3 and STAT4. This process leads to activation of several pathways including p38 MAPK or NF-kappa-B and promotes the production of pro-inflammatory cytokines such as interleukin-17A/IL17A. In turn, participates in the early and effective intracellular bacterial clearance. Promotes the expansion and survival of T-helper 17 cells, a CD4-positive helper T-cell subset that produces IL-17, as well as other IL-17-producing cells.</text>
</comment>
<comment type="subunit">
    <text evidence="2">Heterodimer with IL12B; disulfide-linked. The heterodimer is known as interleukin IL-23. Interacts with IL23R; this interaction enables recruitment of IL12RB1.</text>
</comment>
<comment type="subcellular location">
    <subcellularLocation>
        <location evidence="1">Secreted</location>
    </subcellularLocation>
    <text evidence="1">Secreted upon association with IL12B.</text>
</comment>
<comment type="similarity">
    <text evidence="4">Belongs to the IL-6 superfamily.</text>
</comment>
<name>IL23A_RAT</name>
<proteinExistence type="evidence at transcript level"/>
<sequence>MLDCRAIILLWLLPWATQGLAVPRSSSPDWAQCQQLSRNLCTLAWSAHTPVGQMDLLREEGEEETKSDVPRIQCGDGCDPQGLKDNSQFCLQRIRQGLVFYKHLLDSDIFTGEPSLLPDSPVDQLHTSLLGLSQLLQPEDHHWETQQMPRLSPSQQWQRSLLRSKILRSLQAFLAIAARVFAHGAATLTEPLVPTA</sequence>
<feature type="signal peptide" evidence="3">
    <location>
        <begin position="1"/>
        <end position="21"/>
    </location>
</feature>
<feature type="chain" id="PRO_0000259491" description="Interleukin-23 subunit alpha">
    <location>
        <begin position="22"/>
        <end position="196"/>
    </location>
</feature>
<gene>
    <name type="primary">Il23a</name>
</gene>
<protein>
    <recommendedName>
        <fullName>Interleukin-23 subunit alpha</fullName>
        <shortName>IL-23 subunit alpha</shortName>
        <shortName>IL-23-A</shortName>
    </recommendedName>
    <alternativeName>
        <fullName>Interleukin-23 subunit p19</fullName>
        <shortName>IL-23p19</shortName>
    </alternativeName>
</protein>
<evidence type="ECO:0000250" key="1"/>
<evidence type="ECO:0000250" key="2">
    <source>
        <dbReference type="UniProtKB" id="Q9NPF7"/>
    </source>
</evidence>
<evidence type="ECO:0000255" key="3"/>
<evidence type="ECO:0000305" key="4"/>
<accession>Q91Z84</accession>
<keyword id="KW-0051">Antiviral defense</keyword>
<keyword id="KW-0202">Cytokine</keyword>
<keyword id="KW-1015">Disulfide bond</keyword>
<keyword id="KW-0391">Immunity</keyword>
<keyword id="KW-0395">Inflammatory response</keyword>
<keyword id="KW-0399">Innate immunity</keyword>
<keyword id="KW-1185">Reference proteome</keyword>
<keyword id="KW-0964">Secreted</keyword>
<keyword id="KW-0732">Signal</keyword>
<keyword id="KW-0797">Tissue remodeling</keyword>
<dbReference type="EMBL" id="AY055379">
    <property type="protein sequence ID" value="AAL18229.1"/>
    <property type="molecule type" value="mRNA"/>
</dbReference>
<dbReference type="EMBL" id="BC098907">
    <property type="protein sequence ID" value="AAH98907.1"/>
    <property type="molecule type" value="mRNA"/>
</dbReference>
<dbReference type="RefSeq" id="NP_569094.1">
    <property type="nucleotide sequence ID" value="NM_130410.2"/>
</dbReference>
<dbReference type="SMR" id="Q91Z84"/>
<dbReference type="FunCoup" id="Q91Z84">
    <property type="interactions" value="112"/>
</dbReference>
<dbReference type="STRING" id="10116.ENSRNOP00000004363"/>
<dbReference type="PaxDb" id="10116-ENSRNOP00000004363"/>
<dbReference type="Ensembl" id="ENSRNOT00000004363.4">
    <property type="protein sequence ID" value="ENSRNOP00000004363.2"/>
    <property type="gene ID" value="ENSRNOG00000003254.4"/>
</dbReference>
<dbReference type="GeneID" id="155140"/>
<dbReference type="KEGG" id="rno:155140"/>
<dbReference type="UCSC" id="RGD:620873">
    <property type="organism name" value="rat"/>
</dbReference>
<dbReference type="AGR" id="RGD:620873"/>
<dbReference type="CTD" id="51561"/>
<dbReference type="RGD" id="620873">
    <property type="gene designation" value="Il23a"/>
</dbReference>
<dbReference type="eggNOG" id="ENOG502STAQ">
    <property type="taxonomic scope" value="Eukaryota"/>
</dbReference>
<dbReference type="GeneTree" id="ENSGT00390000006482"/>
<dbReference type="HOGENOM" id="CLU_122915_0_0_1"/>
<dbReference type="InParanoid" id="Q91Z84"/>
<dbReference type="OMA" id="IRCSDAC"/>
<dbReference type="OrthoDB" id="9447007at2759"/>
<dbReference type="PhylomeDB" id="Q91Z84"/>
<dbReference type="TreeFam" id="TF337234"/>
<dbReference type="Reactome" id="R-RNO-9020933">
    <property type="pathway name" value="Interleukin-23 signaling"/>
</dbReference>
<dbReference type="PRO" id="PR:Q91Z84"/>
<dbReference type="Proteomes" id="UP000002494">
    <property type="component" value="Chromosome 7"/>
</dbReference>
<dbReference type="Bgee" id="ENSRNOG00000003254">
    <property type="expression patterns" value="Expressed in thymus and 18 other cell types or tissues"/>
</dbReference>
<dbReference type="GO" id="GO:0005615">
    <property type="term" value="C:extracellular space"/>
    <property type="evidence" value="ECO:0000266"/>
    <property type="project" value="RGD"/>
</dbReference>
<dbReference type="GO" id="GO:0070743">
    <property type="term" value="C:interleukin-23 complex"/>
    <property type="evidence" value="ECO:0000266"/>
    <property type="project" value="RGD"/>
</dbReference>
<dbReference type="GO" id="GO:0005125">
    <property type="term" value="F:cytokine activity"/>
    <property type="evidence" value="ECO:0007669"/>
    <property type="project" value="UniProtKB-KW"/>
</dbReference>
<dbReference type="GO" id="GO:0045519">
    <property type="term" value="F:interleukin-23 receptor binding"/>
    <property type="evidence" value="ECO:0007669"/>
    <property type="project" value="Ensembl"/>
</dbReference>
<dbReference type="GO" id="GO:0007259">
    <property type="term" value="P:cell surface receptor signaling pathway via JAK-STAT"/>
    <property type="evidence" value="ECO:0000266"/>
    <property type="project" value="RGD"/>
</dbReference>
<dbReference type="GO" id="GO:0097696">
    <property type="term" value="P:cell surface receptor signaling pathway via STAT"/>
    <property type="evidence" value="ECO:0000266"/>
    <property type="project" value="RGD"/>
</dbReference>
<dbReference type="GO" id="GO:0050829">
    <property type="term" value="P:defense response to Gram-negative bacterium"/>
    <property type="evidence" value="ECO:0000266"/>
    <property type="project" value="RGD"/>
</dbReference>
<dbReference type="GO" id="GO:0051607">
    <property type="term" value="P:defense response to virus"/>
    <property type="evidence" value="ECO:0007669"/>
    <property type="project" value="UniProtKB-KW"/>
</dbReference>
<dbReference type="GO" id="GO:0006954">
    <property type="term" value="P:inflammatory response"/>
    <property type="evidence" value="ECO:0007669"/>
    <property type="project" value="UniProtKB-KW"/>
</dbReference>
<dbReference type="GO" id="GO:0045087">
    <property type="term" value="P:innate immune response"/>
    <property type="evidence" value="ECO:0007669"/>
    <property type="project" value="UniProtKB-KW"/>
</dbReference>
<dbReference type="GO" id="GO:0032693">
    <property type="term" value="P:negative regulation of interleukin-10 production"/>
    <property type="evidence" value="ECO:0000266"/>
    <property type="project" value="RGD"/>
</dbReference>
<dbReference type="GO" id="GO:0042104">
    <property type="term" value="P:positive regulation of activated T cell proliferation"/>
    <property type="evidence" value="ECO:0000266"/>
    <property type="project" value="RGD"/>
</dbReference>
<dbReference type="GO" id="GO:0002230">
    <property type="term" value="P:positive regulation of defense response to virus by host"/>
    <property type="evidence" value="ECO:0000266"/>
    <property type="project" value="RGD"/>
</dbReference>
<dbReference type="GO" id="GO:0032725">
    <property type="term" value="P:positive regulation of granulocyte macrophage colony-stimulating factor production"/>
    <property type="evidence" value="ECO:0000266"/>
    <property type="project" value="RGD"/>
</dbReference>
<dbReference type="GO" id="GO:0032733">
    <property type="term" value="P:positive regulation of interleukin-10 production"/>
    <property type="evidence" value="ECO:0000266"/>
    <property type="project" value="RGD"/>
</dbReference>
<dbReference type="GO" id="GO:0032735">
    <property type="term" value="P:positive regulation of interleukin-12 production"/>
    <property type="evidence" value="ECO:0000266"/>
    <property type="project" value="RGD"/>
</dbReference>
<dbReference type="GO" id="GO:0032740">
    <property type="term" value="P:positive regulation of interleukin-17 production"/>
    <property type="evidence" value="ECO:0000266"/>
    <property type="project" value="RGD"/>
</dbReference>
<dbReference type="GO" id="GO:0043382">
    <property type="term" value="P:positive regulation of memory T cell differentiation"/>
    <property type="evidence" value="ECO:0000266"/>
    <property type="project" value="RGD"/>
</dbReference>
<dbReference type="GO" id="GO:0032819">
    <property type="term" value="P:positive regulation of natural killer cell proliferation"/>
    <property type="evidence" value="ECO:0000266"/>
    <property type="project" value="RGD"/>
</dbReference>
<dbReference type="GO" id="GO:0090023">
    <property type="term" value="P:positive regulation of neutrophil chemotaxis"/>
    <property type="evidence" value="ECO:0000266"/>
    <property type="project" value="RGD"/>
</dbReference>
<dbReference type="GO" id="GO:0051135">
    <property type="term" value="P:positive regulation of NK T cell activation"/>
    <property type="evidence" value="ECO:0000266"/>
    <property type="project" value="RGD"/>
</dbReference>
<dbReference type="GO" id="GO:0051142">
    <property type="term" value="P:positive regulation of NK T cell proliferation"/>
    <property type="evidence" value="ECO:0000266"/>
    <property type="project" value="RGD"/>
</dbReference>
<dbReference type="GO" id="GO:0045672">
    <property type="term" value="P:positive regulation of osteoclast differentiation"/>
    <property type="evidence" value="ECO:0000266"/>
    <property type="project" value="RGD"/>
</dbReference>
<dbReference type="GO" id="GO:0001916">
    <property type="term" value="P:positive regulation of T cell mediated cytotoxicity"/>
    <property type="evidence" value="ECO:0000266"/>
    <property type="project" value="RGD"/>
</dbReference>
<dbReference type="GO" id="GO:0042102">
    <property type="term" value="P:positive regulation of T cell proliferation"/>
    <property type="evidence" value="ECO:0000266"/>
    <property type="project" value="RGD"/>
</dbReference>
<dbReference type="GO" id="GO:0002827">
    <property type="term" value="P:positive regulation of T-helper 1 type immune response"/>
    <property type="evidence" value="ECO:0000266"/>
    <property type="project" value="RGD"/>
</dbReference>
<dbReference type="GO" id="GO:2000330">
    <property type="term" value="P:positive regulation of T-helper 17 cell lineage commitment"/>
    <property type="evidence" value="ECO:0000266"/>
    <property type="project" value="RGD"/>
</dbReference>
<dbReference type="GO" id="GO:2000318">
    <property type="term" value="P:positive regulation of T-helper 17 type immune response"/>
    <property type="evidence" value="ECO:0000266"/>
    <property type="project" value="RGD"/>
</dbReference>
<dbReference type="GO" id="GO:0045944">
    <property type="term" value="P:positive regulation of transcription by RNA polymerase II"/>
    <property type="evidence" value="ECO:0000266"/>
    <property type="project" value="RGD"/>
</dbReference>
<dbReference type="GO" id="GO:0032760">
    <property type="term" value="P:positive regulation of tumor necrosis factor production"/>
    <property type="evidence" value="ECO:0000266"/>
    <property type="project" value="RGD"/>
</dbReference>
<dbReference type="GO" id="GO:0032729">
    <property type="term" value="P:positive regulation of type II interferon production"/>
    <property type="evidence" value="ECO:0000266"/>
    <property type="project" value="RGD"/>
</dbReference>
<dbReference type="GO" id="GO:0042098">
    <property type="term" value="P:T cell proliferation"/>
    <property type="evidence" value="ECO:0000266"/>
    <property type="project" value="RGD"/>
</dbReference>
<dbReference type="GO" id="GO:0048771">
    <property type="term" value="P:tissue remodeling"/>
    <property type="evidence" value="ECO:0007669"/>
    <property type="project" value="UniProtKB-KW"/>
</dbReference>
<dbReference type="FunFam" id="1.20.1250.10:FF:000024">
    <property type="entry name" value="Interleukin-23 subunit alpha"/>
    <property type="match status" value="1"/>
</dbReference>
<dbReference type="Gene3D" id="1.20.1250.10">
    <property type="match status" value="1"/>
</dbReference>
<dbReference type="InterPro" id="IPR009079">
    <property type="entry name" value="4_helix_cytokine-like_core"/>
</dbReference>
<dbReference type="InterPro" id="IPR010831">
    <property type="entry name" value="IL-23_alpha"/>
</dbReference>
<dbReference type="PANTHER" id="PTHR15947:SF0">
    <property type="entry name" value="INTERLEUKIN-23 SUBUNIT ALPHA"/>
    <property type="match status" value="1"/>
</dbReference>
<dbReference type="PANTHER" id="PTHR15947">
    <property type="entry name" value="SGRF"/>
    <property type="match status" value="1"/>
</dbReference>
<dbReference type="Pfam" id="PF16649">
    <property type="entry name" value="IL23"/>
    <property type="match status" value="1"/>
</dbReference>
<dbReference type="SUPFAM" id="SSF47266">
    <property type="entry name" value="4-helical cytokines"/>
    <property type="match status" value="1"/>
</dbReference>
<organism>
    <name type="scientific">Rattus norvegicus</name>
    <name type="common">Rat</name>
    <dbReference type="NCBI Taxonomy" id="10116"/>
    <lineage>
        <taxon>Eukaryota</taxon>
        <taxon>Metazoa</taxon>
        <taxon>Chordata</taxon>
        <taxon>Craniata</taxon>
        <taxon>Vertebrata</taxon>
        <taxon>Euteleostomi</taxon>
        <taxon>Mammalia</taxon>
        <taxon>Eutheria</taxon>
        <taxon>Euarchontoglires</taxon>
        <taxon>Glires</taxon>
        <taxon>Rodentia</taxon>
        <taxon>Myomorpha</taxon>
        <taxon>Muroidea</taxon>
        <taxon>Muridae</taxon>
        <taxon>Murinae</taxon>
        <taxon>Rattus</taxon>
    </lineage>
</organism>
<reference key="1">
    <citation type="submission" date="2001-09" db="EMBL/GenBank/DDBJ databases">
        <title>Rattus norvegicus IL-23 mRNA.</title>
        <authorList>
            <person name="Tran G."/>
            <person name="Hodgkinson S."/>
        </authorList>
    </citation>
    <scope>NUCLEOTIDE SEQUENCE [MRNA]</scope>
    <source>
        <strain>Lewis</strain>
    </source>
</reference>
<reference key="2">
    <citation type="journal article" date="2004" name="Genome Res.">
        <title>The status, quality, and expansion of the NIH full-length cDNA project: the Mammalian Gene Collection (MGC).</title>
        <authorList>
            <consortium name="The MGC Project Team"/>
        </authorList>
    </citation>
    <scope>NUCLEOTIDE SEQUENCE [LARGE SCALE MRNA]</scope>
    <source>
        <strain>Brown Norway</strain>
        <tissue>Testis</tissue>
    </source>
</reference>